<keyword id="KW-0001">2Fe-2S</keyword>
<keyword id="KW-0963">Cytoplasm</keyword>
<keyword id="KW-0408">Iron</keyword>
<keyword id="KW-0411">Iron-sulfur</keyword>
<keyword id="KW-0479">Metal-binding</keyword>
<keyword id="KW-0663">Pyridoxal phosphate</keyword>
<keyword id="KW-1185">Reference proteome</keyword>
<keyword id="KW-0808">Transferase</keyword>
<organism>
    <name type="scientific">Escherichia coli (strain 55989 / EAEC)</name>
    <dbReference type="NCBI Taxonomy" id="585055"/>
    <lineage>
        <taxon>Bacteria</taxon>
        <taxon>Pseudomonadati</taxon>
        <taxon>Pseudomonadota</taxon>
        <taxon>Gammaproteobacteria</taxon>
        <taxon>Enterobacterales</taxon>
        <taxon>Enterobacteriaceae</taxon>
        <taxon>Escherichia</taxon>
    </lineage>
</organism>
<name>ISCS_ECO55</name>
<sequence>MKLPIYLDYSATTPVDPRVAEKMMQFMTMDGTFGNPASRSHRFGWQAEEAVDIARNQIADLVGADPREIVFTSGATESDNLAIKGAANFYQKKGKHIITSKTEHKAVLDTCRQLEREGFEVTYLAPQRNGIIDLKELEAAMRDDTILVSIMHVNNEIGVVQDIAAIGEMCRARGIIYHVDATQSVGKLPIDLSQLKVDLMSFSGHKIYGPKGIGALYVRRKPRVRIEAQMHGGGHERGMRSGTLPVHQIVGMGEAYRIAKEEMATEMERLRGLRNRLWNGIKDIEEVYLNGDLEHGAPNILNVSFNYVEGESLIMALKDLAVSSGSACTSASLEPSYVLRALGLNDELAHSSIRFSLGRFTTEEEIDYTIELVRKSIGRLRDLSPLWEMYKQGVDLNSIEWAHH</sequence>
<proteinExistence type="inferred from homology"/>
<comment type="function">
    <text evidence="1">Master enzyme that delivers sulfur to a number of partners involved in Fe-S cluster assembly, tRNA modification or cofactor biosynthesis. Catalyzes the removal of elemental sulfur and selenium atoms from cysteine and selenocysteine to produce alanine. Functions as a sulfur delivery protein for Fe-S cluster synthesis onto IscU, an Fe-S scaffold assembly protein, as well as other S acceptor proteins. Also functions as a selenium delivery protein in the pathway for the biosynthesis of selenophosphate.</text>
</comment>
<comment type="catalytic activity">
    <reaction evidence="1">
        <text>(sulfur carrier)-H + L-cysteine = (sulfur carrier)-SH + L-alanine</text>
        <dbReference type="Rhea" id="RHEA:43892"/>
        <dbReference type="Rhea" id="RHEA-COMP:14737"/>
        <dbReference type="Rhea" id="RHEA-COMP:14739"/>
        <dbReference type="ChEBI" id="CHEBI:29917"/>
        <dbReference type="ChEBI" id="CHEBI:35235"/>
        <dbReference type="ChEBI" id="CHEBI:57972"/>
        <dbReference type="ChEBI" id="CHEBI:64428"/>
        <dbReference type="EC" id="2.8.1.7"/>
    </reaction>
</comment>
<comment type="cofactor">
    <cofactor evidence="1">
        <name>pyridoxal 5'-phosphate</name>
        <dbReference type="ChEBI" id="CHEBI:597326"/>
    </cofactor>
</comment>
<comment type="pathway">
    <text evidence="1">Cofactor biosynthesis; iron-sulfur cluster biosynthesis.</text>
</comment>
<comment type="subunit">
    <text evidence="1">Homodimer. Forms a heterotetramer with IscU, interacts with other sulfur acceptors.</text>
</comment>
<comment type="subcellular location">
    <subcellularLocation>
        <location evidence="1">Cytoplasm</location>
    </subcellularLocation>
</comment>
<comment type="similarity">
    <text evidence="1">Belongs to the class-V pyridoxal-phosphate-dependent aminotransferase family. NifS/IscS subfamily.</text>
</comment>
<protein>
    <recommendedName>
        <fullName evidence="1">Cysteine desulfurase IscS</fullName>
        <ecNumber evidence="1">2.8.1.7</ecNumber>
    </recommendedName>
</protein>
<feature type="chain" id="PRO_1000133116" description="Cysteine desulfurase IscS">
    <location>
        <begin position="1"/>
        <end position="404"/>
    </location>
</feature>
<feature type="active site" description="Cysteine persulfide intermediate" evidence="1">
    <location>
        <position position="328"/>
    </location>
</feature>
<feature type="binding site" evidence="1">
    <location>
        <begin position="75"/>
        <end position="76"/>
    </location>
    <ligand>
        <name>pyridoxal 5'-phosphate</name>
        <dbReference type="ChEBI" id="CHEBI:597326"/>
    </ligand>
</feature>
<feature type="binding site" evidence="1">
    <location>
        <position position="155"/>
    </location>
    <ligand>
        <name>pyridoxal 5'-phosphate</name>
        <dbReference type="ChEBI" id="CHEBI:597326"/>
    </ligand>
</feature>
<feature type="binding site" evidence="1">
    <location>
        <position position="183"/>
    </location>
    <ligand>
        <name>pyridoxal 5'-phosphate</name>
        <dbReference type="ChEBI" id="CHEBI:597326"/>
    </ligand>
</feature>
<feature type="binding site" evidence="1">
    <location>
        <begin position="203"/>
        <end position="205"/>
    </location>
    <ligand>
        <name>pyridoxal 5'-phosphate</name>
        <dbReference type="ChEBI" id="CHEBI:597326"/>
    </ligand>
</feature>
<feature type="binding site" evidence="1">
    <location>
        <position position="243"/>
    </location>
    <ligand>
        <name>pyridoxal 5'-phosphate</name>
        <dbReference type="ChEBI" id="CHEBI:597326"/>
    </ligand>
</feature>
<feature type="binding site" description="via persulfide group" evidence="1">
    <location>
        <position position="328"/>
    </location>
    <ligand>
        <name>[2Fe-2S] cluster</name>
        <dbReference type="ChEBI" id="CHEBI:190135"/>
        <note>ligand shared with IscU</note>
    </ligand>
</feature>
<feature type="modified residue" description="N6-(pyridoxal phosphate)lysine" evidence="1">
    <location>
        <position position="206"/>
    </location>
</feature>
<evidence type="ECO:0000255" key="1">
    <source>
        <dbReference type="HAMAP-Rule" id="MF_00331"/>
    </source>
</evidence>
<gene>
    <name evidence="1" type="primary">iscS</name>
    <name type="ordered locus">EC55989_2815</name>
</gene>
<reference key="1">
    <citation type="journal article" date="2009" name="PLoS Genet.">
        <title>Organised genome dynamics in the Escherichia coli species results in highly diverse adaptive paths.</title>
        <authorList>
            <person name="Touchon M."/>
            <person name="Hoede C."/>
            <person name="Tenaillon O."/>
            <person name="Barbe V."/>
            <person name="Baeriswyl S."/>
            <person name="Bidet P."/>
            <person name="Bingen E."/>
            <person name="Bonacorsi S."/>
            <person name="Bouchier C."/>
            <person name="Bouvet O."/>
            <person name="Calteau A."/>
            <person name="Chiapello H."/>
            <person name="Clermont O."/>
            <person name="Cruveiller S."/>
            <person name="Danchin A."/>
            <person name="Diard M."/>
            <person name="Dossat C."/>
            <person name="Karoui M.E."/>
            <person name="Frapy E."/>
            <person name="Garry L."/>
            <person name="Ghigo J.M."/>
            <person name="Gilles A.M."/>
            <person name="Johnson J."/>
            <person name="Le Bouguenec C."/>
            <person name="Lescat M."/>
            <person name="Mangenot S."/>
            <person name="Martinez-Jehanne V."/>
            <person name="Matic I."/>
            <person name="Nassif X."/>
            <person name="Oztas S."/>
            <person name="Petit M.A."/>
            <person name="Pichon C."/>
            <person name="Rouy Z."/>
            <person name="Ruf C.S."/>
            <person name="Schneider D."/>
            <person name="Tourret J."/>
            <person name="Vacherie B."/>
            <person name="Vallenet D."/>
            <person name="Medigue C."/>
            <person name="Rocha E.P.C."/>
            <person name="Denamur E."/>
        </authorList>
    </citation>
    <scope>NUCLEOTIDE SEQUENCE [LARGE SCALE GENOMIC DNA]</scope>
    <source>
        <strain>55989 / EAEC</strain>
    </source>
</reference>
<accession>B7LDC2</accession>
<dbReference type="EC" id="2.8.1.7" evidence="1"/>
<dbReference type="EMBL" id="CU928145">
    <property type="protein sequence ID" value="CAU98688.1"/>
    <property type="molecule type" value="Genomic_DNA"/>
</dbReference>
<dbReference type="RefSeq" id="WP_001295373.1">
    <property type="nucleotide sequence ID" value="NZ_CP028304.1"/>
</dbReference>
<dbReference type="SMR" id="B7LDC2"/>
<dbReference type="GeneID" id="93774606"/>
<dbReference type="KEGG" id="eck:EC55989_2815"/>
<dbReference type="HOGENOM" id="CLU_003433_0_2_6"/>
<dbReference type="UniPathway" id="UPA00266"/>
<dbReference type="Proteomes" id="UP000000746">
    <property type="component" value="Chromosome"/>
</dbReference>
<dbReference type="GO" id="GO:1990221">
    <property type="term" value="C:L-cysteine desulfurase complex"/>
    <property type="evidence" value="ECO:0007669"/>
    <property type="project" value="UniProtKB-ARBA"/>
</dbReference>
<dbReference type="GO" id="GO:0051537">
    <property type="term" value="F:2 iron, 2 sulfur cluster binding"/>
    <property type="evidence" value="ECO:0007669"/>
    <property type="project" value="UniProtKB-UniRule"/>
</dbReference>
<dbReference type="GO" id="GO:0031071">
    <property type="term" value="F:cysteine desulfurase activity"/>
    <property type="evidence" value="ECO:0007669"/>
    <property type="project" value="UniProtKB-UniRule"/>
</dbReference>
<dbReference type="GO" id="GO:0046872">
    <property type="term" value="F:metal ion binding"/>
    <property type="evidence" value="ECO:0007669"/>
    <property type="project" value="UniProtKB-KW"/>
</dbReference>
<dbReference type="GO" id="GO:0030170">
    <property type="term" value="F:pyridoxal phosphate binding"/>
    <property type="evidence" value="ECO:0007669"/>
    <property type="project" value="UniProtKB-UniRule"/>
</dbReference>
<dbReference type="GO" id="GO:0044571">
    <property type="term" value="P:[2Fe-2S] cluster assembly"/>
    <property type="evidence" value="ECO:0007669"/>
    <property type="project" value="UniProtKB-UniRule"/>
</dbReference>
<dbReference type="FunFam" id="3.40.640.10:FF:000003">
    <property type="entry name" value="Cysteine desulfurase IscS"/>
    <property type="match status" value="1"/>
</dbReference>
<dbReference type="FunFam" id="3.90.1150.10:FF:000002">
    <property type="entry name" value="Cysteine desulfurase IscS"/>
    <property type="match status" value="1"/>
</dbReference>
<dbReference type="Gene3D" id="3.90.1150.10">
    <property type="entry name" value="Aspartate Aminotransferase, domain 1"/>
    <property type="match status" value="1"/>
</dbReference>
<dbReference type="Gene3D" id="3.40.640.10">
    <property type="entry name" value="Type I PLP-dependent aspartate aminotransferase-like (Major domain)"/>
    <property type="match status" value="1"/>
</dbReference>
<dbReference type="HAMAP" id="MF_00331">
    <property type="entry name" value="Cys_desulf_IscS"/>
    <property type="match status" value="1"/>
</dbReference>
<dbReference type="InterPro" id="IPR000192">
    <property type="entry name" value="Aminotrans_V_dom"/>
</dbReference>
<dbReference type="InterPro" id="IPR020578">
    <property type="entry name" value="Aminotrans_V_PyrdxlP_BS"/>
</dbReference>
<dbReference type="InterPro" id="IPR010240">
    <property type="entry name" value="Cys_deSase_IscS"/>
</dbReference>
<dbReference type="InterPro" id="IPR016454">
    <property type="entry name" value="Cysteine_dSase"/>
</dbReference>
<dbReference type="InterPro" id="IPR015424">
    <property type="entry name" value="PyrdxlP-dep_Trfase"/>
</dbReference>
<dbReference type="InterPro" id="IPR015421">
    <property type="entry name" value="PyrdxlP-dep_Trfase_major"/>
</dbReference>
<dbReference type="InterPro" id="IPR015422">
    <property type="entry name" value="PyrdxlP-dep_Trfase_small"/>
</dbReference>
<dbReference type="NCBIfam" id="TIGR02006">
    <property type="entry name" value="IscS"/>
    <property type="match status" value="1"/>
</dbReference>
<dbReference type="NCBIfam" id="NF002806">
    <property type="entry name" value="PRK02948.1"/>
    <property type="match status" value="1"/>
</dbReference>
<dbReference type="NCBIfam" id="NF010611">
    <property type="entry name" value="PRK14012.1"/>
    <property type="match status" value="1"/>
</dbReference>
<dbReference type="PANTHER" id="PTHR11601:SF34">
    <property type="entry name" value="CYSTEINE DESULFURASE"/>
    <property type="match status" value="1"/>
</dbReference>
<dbReference type="PANTHER" id="PTHR11601">
    <property type="entry name" value="CYSTEINE DESULFURYLASE FAMILY MEMBER"/>
    <property type="match status" value="1"/>
</dbReference>
<dbReference type="Pfam" id="PF00266">
    <property type="entry name" value="Aminotran_5"/>
    <property type="match status" value="1"/>
</dbReference>
<dbReference type="PIRSF" id="PIRSF005572">
    <property type="entry name" value="NifS"/>
    <property type="match status" value="1"/>
</dbReference>
<dbReference type="SUPFAM" id="SSF53383">
    <property type="entry name" value="PLP-dependent transferases"/>
    <property type="match status" value="1"/>
</dbReference>
<dbReference type="PROSITE" id="PS00595">
    <property type="entry name" value="AA_TRANSFER_CLASS_5"/>
    <property type="match status" value="1"/>
</dbReference>